<keyword id="KW-0456">Lyase</keyword>
<keyword id="KW-0501">Molybdenum cofactor biosynthesis</keyword>
<evidence type="ECO:0000255" key="1">
    <source>
        <dbReference type="HAMAP-Rule" id="MF_01224"/>
    </source>
</evidence>
<protein>
    <recommendedName>
        <fullName evidence="1">Cyclic pyranopterin monophosphate synthase</fullName>
        <ecNumber evidence="1">4.6.1.17</ecNumber>
    </recommendedName>
    <alternativeName>
        <fullName evidence="1">Molybdenum cofactor biosynthesis protein C</fullName>
    </alternativeName>
</protein>
<organism>
    <name type="scientific">Haemophilus influenzae (strain PittEE)</name>
    <dbReference type="NCBI Taxonomy" id="374930"/>
    <lineage>
        <taxon>Bacteria</taxon>
        <taxon>Pseudomonadati</taxon>
        <taxon>Pseudomonadota</taxon>
        <taxon>Gammaproteobacteria</taxon>
        <taxon>Pasteurellales</taxon>
        <taxon>Pasteurellaceae</taxon>
        <taxon>Haemophilus</taxon>
    </lineage>
</organism>
<comment type="function">
    <text evidence="1">Catalyzes the conversion of (8S)-3',8-cyclo-7,8-dihydroguanosine 5'-triphosphate to cyclic pyranopterin monophosphate (cPMP).</text>
</comment>
<comment type="catalytic activity">
    <reaction evidence="1">
        <text>(8S)-3',8-cyclo-7,8-dihydroguanosine 5'-triphosphate = cyclic pyranopterin phosphate + diphosphate</text>
        <dbReference type="Rhea" id="RHEA:49580"/>
        <dbReference type="ChEBI" id="CHEBI:33019"/>
        <dbReference type="ChEBI" id="CHEBI:59648"/>
        <dbReference type="ChEBI" id="CHEBI:131766"/>
        <dbReference type="EC" id="4.6.1.17"/>
    </reaction>
</comment>
<comment type="pathway">
    <text evidence="1">Cofactor biosynthesis; molybdopterin biosynthesis.</text>
</comment>
<comment type="subunit">
    <text evidence="1">Homohexamer; trimer of dimers.</text>
</comment>
<comment type="similarity">
    <text evidence="1">Belongs to the MoaC family.</text>
</comment>
<gene>
    <name evidence="1" type="primary">moaC</name>
    <name type="ordered locus">CGSHiEE_03685</name>
</gene>
<name>MOAC_HAEIE</name>
<reference key="1">
    <citation type="journal article" date="2007" name="Genome Biol.">
        <title>Characterization and modeling of the Haemophilus influenzae core and supragenomes based on the complete genomic sequences of Rd and 12 clinical nontypeable strains.</title>
        <authorList>
            <person name="Hogg J.S."/>
            <person name="Hu F.Z."/>
            <person name="Janto B."/>
            <person name="Boissy R."/>
            <person name="Hayes J."/>
            <person name="Keefe R."/>
            <person name="Post J.C."/>
            <person name="Ehrlich G.D."/>
        </authorList>
    </citation>
    <scope>NUCLEOTIDE SEQUENCE [LARGE SCALE GENOMIC DNA]</scope>
    <source>
        <strain>PittEE</strain>
    </source>
</reference>
<proteinExistence type="inferred from homology"/>
<dbReference type="EC" id="4.6.1.17" evidence="1"/>
<dbReference type="EMBL" id="CP000671">
    <property type="protein sequence ID" value="ABQ98156.1"/>
    <property type="molecule type" value="Genomic_DNA"/>
</dbReference>
<dbReference type="SMR" id="A5UBK5"/>
<dbReference type="KEGG" id="hip:CGSHiEE_03685"/>
<dbReference type="HOGENOM" id="CLU_074693_1_1_6"/>
<dbReference type="UniPathway" id="UPA00344"/>
<dbReference type="GO" id="GO:0061799">
    <property type="term" value="F:cyclic pyranopterin monophosphate synthase activity"/>
    <property type="evidence" value="ECO:0007669"/>
    <property type="project" value="UniProtKB-UniRule"/>
</dbReference>
<dbReference type="GO" id="GO:0006777">
    <property type="term" value="P:Mo-molybdopterin cofactor biosynthetic process"/>
    <property type="evidence" value="ECO:0007669"/>
    <property type="project" value="UniProtKB-UniRule"/>
</dbReference>
<dbReference type="CDD" id="cd01420">
    <property type="entry name" value="MoaC_PE"/>
    <property type="match status" value="1"/>
</dbReference>
<dbReference type="FunFam" id="3.30.70.640:FF:000001">
    <property type="entry name" value="Cyclic pyranopterin monophosphate synthase"/>
    <property type="match status" value="1"/>
</dbReference>
<dbReference type="Gene3D" id="3.30.70.640">
    <property type="entry name" value="Molybdopterin cofactor biosynthesis C (MoaC) domain"/>
    <property type="match status" value="1"/>
</dbReference>
<dbReference type="HAMAP" id="MF_01224_B">
    <property type="entry name" value="MoaC_B"/>
    <property type="match status" value="1"/>
</dbReference>
<dbReference type="InterPro" id="IPR023045">
    <property type="entry name" value="MoaC"/>
</dbReference>
<dbReference type="InterPro" id="IPR047594">
    <property type="entry name" value="MoaC_bact/euk"/>
</dbReference>
<dbReference type="InterPro" id="IPR036522">
    <property type="entry name" value="MoaC_sf"/>
</dbReference>
<dbReference type="InterPro" id="IPR050105">
    <property type="entry name" value="MoCo_biosynth_MoaA/MoaC"/>
</dbReference>
<dbReference type="InterPro" id="IPR002820">
    <property type="entry name" value="Mopterin_CF_biosynth-C_dom"/>
</dbReference>
<dbReference type="NCBIfam" id="TIGR00581">
    <property type="entry name" value="moaC"/>
    <property type="match status" value="1"/>
</dbReference>
<dbReference type="NCBIfam" id="NF006870">
    <property type="entry name" value="PRK09364.1"/>
    <property type="match status" value="1"/>
</dbReference>
<dbReference type="PANTHER" id="PTHR22960">
    <property type="entry name" value="MOLYBDOPTERIN COFACTOR SYNTHESIS PROTEIN A"/>
    <property type="match status" value="1"/>
</dbReference>
<dbReference type="Pfam" id="PF01967">
    <property type="entry name" value="MoaC"/>
    <property type="match status" value="1"/>
</dbReference>
<dbReference type="SUPFAM" id="SSF55040">
    <property type="entry name" value="Molybdenum cofactor biosynthesis protein C, MoaC"/>
    <property type="match status" value="1"/>
</dbReference>
<sequence>MTTFTHINSQGEANMVDVSAKAETVREARAEAIVTMSKETLAMIVEGKHHKGDVFATARIAGIQAAKRTWELIPLCHPLLLSKVEVNLEPLLETNRVRIQSLCKLTGKTGVEMEALTAVSVAALTIYDMCKAVQKDIVIEQVRLLEKSGGKSGHFVAEEK</sequence>
<accession>A5UBK5</accession>
<feature type="chain" id="PRO_1000054098" description="Cyclic pyranopterin monophosphate synthase">
    <location>
        <begin position="1"/>
        <end position="160"/>
    </location>
</feature>
<feature type="active site" evidence="1">
    <location>
        <position position="128"/>
    </location>
</feature>
<feature type="binding site" evidence="1">
    <location>
        <begin position="75"/>
        <end position="77"/>
    </location>
    <ligand>
        <name>substrate</name>
    </ligand>
</feature>
<feature type="binding site" evidence="1">
    <location>
        <begin position="113"/>
        <end position="114"/>
    </location>
    <ligand>
        <name>substrate</name>
    </ligand>
</feature>